<organism>
    <name type="scientific">Gibberella zeae (strain ATCC MYA-4620 / CBS 123657 / FGSC 9075 / NRRL 31084 / PH-1)</name>
    <name type="common">Wheat head blight fungus</name>
    <name type="synonym">Fusarium graminearum</name>
    <dbReference type="NCBI Taxonomy" id="229533"/>
    <lineage>
        <taxon>Eukaryota</taxon>
        <taxon>Fungi</taxon>
        <taxon>Dikarya</taxon>
        <taxon>Ascomycota</taxon>
        <taxon>Pezizomycotina</taxon>
        <taxon>Sordariomycetes</taxon>
        <taxon>Hypocreomycetidae</taxon>
        <taxon>Hypocreales</taxon>
        <taxon>Nectriaceae</taxon>
        <taxon>Fusarium</taxon>
    </lineage>
</organism>
<comment type="function">
    <text evidence="7 9 13">Non-reducing polyketide synthase; part of the gene cluster that mediates the biosynthesis of diterpenoid pyrones (PubMed:32286350, PubMed:36294594, PubMed:37504684). The first step of the pathway is the synthesis of the alpha-pyrone moiety by the polyketide synthase dpfgA via condensation of one acetyl-CoA starter unit with 3 malonyl-CoA units and 2 methylations (Probable). The alpha-pyrone is then combined with geranylgeranyl pyrophosphate (GGPP) formed by the GGPP synthase dpfgD through the action of the prenyltransferase dpfgC to yield a linear alpha-pyrone diterpenoid (Probable). Subsequent steps in the diterpenoid pyrone biosynthetic pathway involve the decalin core formation, which is initiated by the epoxidation of the C10-C11 olefin by the FAD-dependent oxidoreductase dpfgE, and is followed by a cyclization cascade catalyzed by the terpene cyclase dpfgB (Probable). The short chain dehydrogenase/reductase dpfgG then oxidizes the 8S hydroxy group to a ketone and the short chain dehydrogenase/reductase dpfgH reduces the ketone to the 8R hydroxy group to yield higginsianin B (PubMed:32286350). Higginsianin B is further methylated by the methyltransferase dpfgI to produce the intermediate named FDDP B (PubMed:32286350). The cytochrome P450 monooxygenase dfgpJ then catalyzes a three-step oxidation at C-27 to generate a carboxylic acid as well as C-26 hydroxylation (PubMed:32286350). Finally, methyltransferase dpfgK methylates the carboxylic acid generated by dpfgJ, yielding the final diterpenoid pyrones from the pathway which were named FDDP D and FDDP E (PubMed:32286350).</text>
</comment>
<comment type="pathway">
    <text evidence="9">Secondary metabolite biosynthesis; terpenoid biosynthesis.</text>
</comment>
<comment type="domain">
    <text evidence="12">Multidomain protein; including a starter unit:ACP transacylase (SAT) that selects the starter unit; a ketosynthase (KS) that catalyzes repeated decarboxylative condensation to elongate the polyketide backbone; a malonyl-CoA:ACP transacylase (MAT) that selects and transfers the extender unit malonyl-CoA; a product template (PT) domain that controls the immediate cyclization regioselectivity of the reactive polyketide backbone; a methyltransferase (CMeT) domain responsible for methylations; and an acyl-carrier protein (ACP) that serves as the tether of the growing and completed polyketide via its phosphopantetheinyl arm.</text>
</comment>
<comment type="disruption phenotype">
    <text evidence="8 9">Abolishes the production of both diterpenoid pyrones FDDP D and FDDP E.</text>
</comment>
<comment type="biotechnology">
    <text evidence="7">Diterpenoid pyrones display various biological activities and FDDP E shows anti-HIV activity (PubMed:32286350). FDDP D and FDDP E show also inhibitory activity of 42-mer-amyloid beta aggregation that is involved in the pathogenesis of Alzheimer's disease (PubMed:32286350).</text>
</comment>
<proteinExistence type="evidence at protein level"/>
<protein>
    <recommendedName>
        <fullName evidence="10">Non-reducing polyketide synthase dpfgA</fullName>
        <ecNumber evidence="13">2.3.1.-</ecNumber>
    </recommendedName>
    <alternativeName>
        <fullName evidence="10">Diterpenoid pyrone biosynthesis cluster protein A</fullName>
    </alternativeName>
</protein>
<evidence type="ECO:0000255" key="1"/>
<evidence type="ECO:0000255" key="2">
    <source>
        <dbReference type="PROSITE-ProRule" id="PRU00258"/>
    </source>
</evidence>
<evidence type="ECO:0000255" key="3">
    <source>
        <dbReference type="PROSITE-ProRule" id="PRU01348"/>
    </source>
</evidence>
<evidence type="ECO:0000255" key="4">
    <source>
        <dbReference type="PROSITE-ProRule" id="PRU01363"/>
    </source>
</evidence>
<evidence type="ECO:0000255" key="5">
    <source>
        <dbReference type="PROSITE-ProRule" id="PRU10022"/>
    </source>
</evidence>
<evidence type="ECO:0000256" key="6">
    <source>
        <dbReference type="SAM" id="MobiDB-lite"/>
    </source>
</evidence>
<evidence type="ECO:0000269" key="7">
    <source>
    </source>
</evidence>
<evidence type="ECO:0000269" key="8">
    <source>
    </source>
</evidence>
<evidence type="ECO:0000269" key="9">
    <source>
    </source>
</evidence>
<evidence type="ECO:0000303" key="10">
    <source>
    </source>
</evidence>
<evidence type="ECO:0000303" key="11">
    <source>
    </source>
</evidence>
<evidence type="ECO:0000305" key="12"/>
<evidence type="ECO:0000305" key="13">
    <source>
    </source>
</evidence>
<keyword id="KW-0489">Methyltransferase</keyword>
<keyword id="KW-0511">Multifunctional enzyme</keyword>
<keyword id="KW-0596">Phosphopantetheine</keyword>
<keyword id="KW-0597">Phosphoprotein</keyword>
<keyword id="KW-1185">Reference proteome</keyword>
<keyword id="KW-0808">Transferase</keyword>
<sequence length="2172" mass="238750">MATDSPSLLICGSVISDPDHAYLSRIRSSIIHNPHLAELQDAVIELPELWSLLVEREKSLQRVDAARVLRNLVEWIKCGNSSLPLEGRTSRNTQLAVLTVLAHFSEYMIYLNSHDMSEEDGRGNLDAHTSVLEGVRDGGIQGLCVGLLSAIALACSPTITDVAKYGTVAVRLALCVGALVDLDETELSEPTACIFARWPQSEDDDREELLKAVLENYPSSYVGVRLDVCSVNITAPKGVAMSLMRSLEETGAVAKQINLQGRYHHPGHEAMFQKLTDLCASLQMLQFPHHSHPLVPLRWNDSGEVVTDQTPLHEVALQCILVKRADWYTTITKSVTDMAQRTVASSADSKARVLALGPVDCIPRSILFITPLQVVRPMANAAFYHGYPDDSIAIIGVSCRFPGSETLPQFWEEIRAKRVNSCLEAAGSLDCAFFRKPPREAEHMDPQHRLGLHLAYEALQSGGYFSPSSSVTDNVGCYIGMSSCDYEENVNSHPPTAYSFTGTARAFSSGRISHFFGFTGPSMVIDTACSSSGVAIHTACKAIQSGECSMALAGGINLMVPEARSHQNLAAASFLSPTGQCRPFDARADGYRRSEGGGFVLLKRLSAAVADNDCILGVLAASAVNNSKGSRSITLPSIESQSHLYRRVLQAAGLHPHQVSYVEAHGTGTQKGDPIEWQSIQNVFGGRDRSGLPPLRLGSVKGNIGHCEAASGVAALVKVILMLQNRQIPPQANFSVLNPALPSLEEANMDIPVCLEPWEAPFRAAMVNNYGASGTNAAMLVCQPPLASPERLMSTGQPHQCPILIASHSESSIRQYCRTLMSFVETQRCVLGDSLLPSIAFHLGQRQNESCRHRVAFSATSADELKVRLHSQARNNHDESKASKPQGRPKPVVLVFAGQTGRQALLSREAYLSSSLLQHHLDRCDRILQTMGLHSLFPRIFETEPVDDLVDLHCMHFSLQYSVAASWIDTGLEIKAMVGHSLGQLTALCVSGVLSLRDALKMISGRASLIQNKWGSERGCMLSVEADAPTVETIAQSMPGAGKIEIACYNAALHQVIVGTEAAIAAFEEVARSRNVSVKRLLVSRGFHSEMMDCIVPEYQQLIQQLTLHPSVIPFEPCCKLGDNWDNITPELIARQSREPVYFSDAIRRVEKRLGPCIWLEAGSGSAGVTMARRALTNPGTPSFPSHSFHSILLQGQNPIKSLADTTINLWNEGIRVQFWLYHASERRRFMPLELPPSPFEKSEHWLPVLQKHKDSELANQNQDQKQEAPELVSLAGPTDGETVEFFINQHSNDYSTFVRGRTVFGQVLAPSSVYIEAVTRAFTLLPMYLSTPSSSPPSVEVKQVRMHAPFGLDLQKRLRLTLRKETMSSWRFVVESHPIDDGDNKARKIQASGTINWQGQGCAYLEPSRPLLRRLYDRCDELRDDRSASTVQGLFVKNILARVATYDNRYLGIQSITSKGLEAVADVAMPTIMSQACAGTVLSPPIFDNFLLIAELHASSLEDLAEDVYICNGFDAVIPHAHPGDMVSKCEGPWMVLSYLNRENDKTVSCDIFVTSADRDILLLEIIGASLKRIPIRSLQKALESINGIQQIQGSTARGTASTVVIDSDSDLPDSEANSPRVGSDLHADFPDLHPTYVPRISRVTSSDYPMDSSSFSSAQPPSSASSVLSDHDQESTALLSLLSEHLNCSQGIPPDTRLGEIGLDSLVAIQLKSDVEKAFGKRLSLDTIDENLTFSDLYRMVLNHDLPNDRGSTVLSDKAPKSKSDSSLHGQSYHVTPIRETTVSFQDSTLFTTQARLEFAQIKQETSSFAQMTGFAGFYTDVHQKQTSLVLAYILEAFSTLGCDLSALQAGDPLPPLRYTSKYQKLVSRFHKILEGAGLISVCEGQSVRFRTAEPLPQFGSSADTYRELLNECPKYRPDHQLLNVTGSRLSDCLSGRADPLQLLFRDAAAVKLLEDVYVSSPMFATGNKMLGEFLHRVLSRLGSTKRLRVLEVGAGTGATTRNAMDQLLASNVDFTYTFTDVSIALVTSAKKKFGALYNSQRRQSNMEFTVLDIEKSPPANMLESYDLIISSNCIHATRNLGQACANIEKLLRRDGGMLCLLELTRPLSWLDCVFGLLDGWWRFDDDRTYALADEHKWKSTLLDAGFIHVDWTDDGYRESEQFRLITAWR</sequence>
<dbReference type="EC" id="2.3.1.-" evidence="13"/>
<dbReference type="EMBL" id="HG970333">
    <property type="protein sequence ID" value="CEF79623.1"/>
    <property type="molecule type" value="Genomic_DNA"/>
</dbReference>
<dbReference type="RefSeq" id="XP_011320993.1">
    <property type="nucleotide sequence ID" value="XM_011322691.1"/>
</dbReference>
<dbReference type="SMR" id="I1RL11"/>
<dbReference type="STRING" id="229533.I1RL11"/>
<dbReference type="KEGG" id="fgr:FGSG_04588"/>
<dbReference type="VEuPathDB" id="FungiDB:FGRAMPH1_01G15647"/>
<dbReference type="eggNOG" id="KOG1202">
    <property type="taxonomic scope" value="Eukaryota"/>
</dbReference>
<dbReference type="HOGENOM" id="CLU_000022_6_3_1"/>
<dbReference type="InParanoid" id="I1RL11"/>
<dbReference type="OrthoDB" id="62701at110618"/>
<dbReference type="UniPathway" id="UPA00213"/>
<dbReference type="Proteomes" id="UP000070720">
    <property type="component" value="Chromosome 2"/>
</dbReference>
<dbReference type="GO" id="GO:0004315">
    <property type="term" value="F:3-oxoacyl-[acyl-carrier-protein] synthase activity"/>
    <property type="evidence" value="ECO:0007669"/>
    <property type="project" value="InterPro"/>
</dbReference>
<dbReference type="GO" id="GO:0004312">
    <property type="term" value="F:fatty acid synthase activity"/>
    <property type="evidence" value="ECO:0007669"/>
    <property type="project" value="TreeGrafter"/>
</dbReference>
<dbReference type="GO" id="GO:0008168">
    <property type="term" value="F:methyltransferase activity"/>
    <property type="evidence" value="ECO:0007669"/>
    <property type="project" value="UniProtKB-KW"/>
</dbReference>
<dbReference type="GO" id="GO:0006633">
    <property type="term" value="P:fatty acid biosynthetic process"/>
    <property type="evidence" value="ECO:0007669"/>
    <property type="project" value="InterPro"/>
</dbReference>
<dbReference type="GO" id="GO:0032259">
    <property type="term" value="P:methylation"/>
    <property type="evidence" value="ECO:0007669"/>
    <property type="project" value="UniProtKB-KW"/>
</dbReference>
<dbReference type="GO" id="GO:0044550">
    <property type="term" value="P:secondary metabolite biosynthetic process"/>
    <property type="evidence" value="ECO:0007669"/>
    <property type="project" value="TreeGrafter"/>
</dbReference>
<dbReference type="GO" id="GO:0016114">
    <property type="term" value="P:terpenoid biosynthetic process"/>
    <property type="evidence" value="ECO:0007669"/>
    <property type="project" value="UniProtKB-UniPathway"/>
</dbReference>
<dbReference type="CDD" id="cd02440">
    <property type="entry name" value="AdoMet_MTases"/>
    <property type="match status" value="1"/>
</dbReference>
<dbReference type="CDD" id="cd00833">
    <property type="entry name" value="PKS"/>
    <property type="match status" value="1"/>
</dbReference>
<dbReference type="Gene3D" id="3.30.70.3290">
    <property type="match status" value="1"/>
</dbReference>
<dbReference type="Gene3D" id="3.40.47.10">
    <property type="match status" value="1"/>
</dbReference>
<dbReference type="Gene3D" id="1.10.1200.10">
    <property type="entry name" value="ACP-like"/>
    <property type="match status" value="1"/>
</dbReference>
<dbReference type="Gene3D" id="3.40.366.10">
    <property type="entry name" value="Malonyl-Coenzyme A Acyl Carrier Protein, domain 2"/>
    <property type="match status" value="2"/>
</dbReference>
<dbReference type="Gene3D" id="3.10.129.110">
    <property type="entry name" value="Polyketide synthase dehydratase"/>
    <property type="match status" value="1"/>
</dbReference>
<dbReference type="Gene3D" id="3.40.50.150">
    <property type="entry name" value="Vaccinia Virus protein VP39"/>
    <property type="match status" value="1"/>
</dbReference>
<dbReference type="InterPro" id="IPR001227">
    <property type="entry name" value="Ac_transferase_dom_sf"/>
</dbReference>
<dbReference type="InterPro" id="IPR036736">
    <property type="entry name" value="ACP-like_sf"/>
</dbReference>
<dbReference type="InterPro" id="IPR014043">
    <property type="entry name" value="Acyl_transferase_dom"/>
</dbReference>
<dbReference type="InterPro" id="IPR016035">
    <property type="entry name" value="Acyl_Trfase/lysoPLipase"/>
</dbReference>
<dbReference type="InterPro" id="IPR018201">
    <property type="entry name" value="Ketoacyl_synth_AS"/>
</dbReference>
<dbReference type="InterPro" id="IPR014031">
    <property type="entry name" value="Ketoacyl_synth_C"/>
</dbReference>
<dbReference type="InterPro" id="IPR014030">
    <property type="entry name" value="Ketoacyl_synth_N"/>
</dbReference>
<dbReference type="InterPro" id="IPR016036">
    <property type="entry name" value="Malonyl_transacylase_ACP-bd"/>
</dbReference>
<dbReference type="InterPro" id="IPR013217">
    <property type="entry name" value="Methyltransf_12"/>
</dbReference>
<dbReference type="InterPro" id="IPR020841">
    <property type="entry name" value="PKS_Beta-ketoAc_synthase_dom"/>
</dbReference>
<dbReference type="InterPro" id="IPR042104">
    <property type="entry name" value="PKS_dehydratase_sf"/>
</dbReference>
<dbReference type="InterPro" id="IPR049900">
    <property type="entry name" value="PKS_mFAS_DH"/>
</dbReference>
<dbReference type="InterPro" id="IPR050091">
    <property type="entry name" value="PKS_NRPS_Biosynth_Enz"/>
</dbReference>
<dbReference type="InterPro" id="IPR009081">
    <property type="entry name" value="PP-bd_ACP"/>
</dbReference>
<dbReference type="InterPro" id="IPR029063">
    <property type="entry name" value="SAM-dependent_MTases_sf"/>
</dbReference>
<dbReference type="InterPro" id="IPR032088">
    <property type="entry name" value="SAT"/>
</dbReference>
<dbReference type="InterPro" id="IPR016039">
    <property type="entry name" value="Thiolase-like"/>
</dbReference>
<dbReference type="PANTHER" id="PTHR43775">
    <property type="entry name" value="FATTY ACID SYNTHASE"/>
    <property type="match status" value="1"/>
</dbReference>
<dbReference type="PANTHER" id="PTHR43775:SF21">
    <property type="entry name" value="NON-REDUCING POLYKETIDE SYNTHASE AUSA-RELATED"/>
    <property type="match status" value="1"/>
</dbReference>
<dbReference type="Pfam" id="PF00698">
    <property type="entry name" value="Acyl_transf_1"/>
    <property type="match status" value="1"/>
</dbReference>
<dbReference type="Pfam" id="PF18558">
    <property type="entry name" value="HTH_51"/>
    <property type="match status" value="1"/>
</dbReference>
<dbReference type="Pfam" id="PF00109">
    <property type="entry name" value="ketoacyl-synt"/>
    <property type="match status" value="1"/>
</dbReference>
<dbReference type="Pfam" id="PF02801">
    <property type="entry name" value="Ketoacyl-synt_C"/>
    <property type="match status" value="1"/>
</dbReference>
<dbReference type="Pfam" id="PF08242">
    <property type="entry name" value="Methyltransf_12"/>
    <property type="match status" value="1"/>
</dbReference>
<dbReference type="Pfam" id="PF00550">
    <property type="entry name" value="PP-binding"/>
    <property type="match status" value="1"/>
</dbReference>
<dbReference type="Pfam" id="PF16073">
    <property type="entry name" value="SAT"/>
    <property type="match status" value="1"/>
</dbReference>
<dbReference type="SMART" id="SM00827">
    <property type="entry name" value="PKS_AT"/>
    <property type="match status" value="1"/>
</dbReference>
<dbReference type="SMART" id="SM00825">
    <property type="entry name" value="PKS_KS"/>
    <property type="match status" value="1"/>
</dbReference>
<dbReference type="SUPFAM" id="SSF47336">
    <property type="entry name" value="ACP-like"/>
    <property type="match status" value="1"/>
</dbReference>
<dbReference type="SUPFAM" id="SSF52151">
    <property type="entry name" value="FabD/lysophospholipase-like"/>
    <property type="match status" value="1"/>
</dbReference>
<dbReference type="SUPFAM" id="SSF55048">
    <property type="entry name" value="Probable ACP-binding domain of malonyl-CoA ACP transacylase"/>
    <property type="match status" value="1"/>
</dbReference>
<dbReference type="SUPFAM" id="SSF53335">
    <property type="entry name" value="S-adenosyl-L-methionine-dependent methyltransferases"/>
    <property type="match status" value="1"/>
</dbReference>
<dbReference type="SUPFAM" id="SSF53901">
    <property type="entry name" value="Thiolase-like"/>
    <property type="match status" value="1"/>
</dbReference>
<dbReference type="PROSITE" id="PS50075">
    <property type="entry name" value="CARRIER"/>
    <property type="match status" value="1"/>
</dbReference>
<dbReference type="PROSITE" id="PS00606">
    <property type="entry name" value="KS3_1"/>
    <property type="match status" value="1"/>
</dbReference>
<dbReference type="PROSITE" id="PS52004">
    <property type="entry name" value="KS3_2"/>
    <property type="match status" value="1"/>
</dbReference>
<dbReference type="PROSITE" id="PS52019">
    <property type="entry name" value="PKS_MFAS_DH"/>
    <property type="match status" value="1"/>
</dbReference>
<feature type="chain" id="PRO_0000451524" description="Non-reducing polyketide synthase dpfgA">
    <location>
        <begin position="1"/>
        <end position="2172"/>
    </location>
</feature>
<feature type="domain" description="Ketosynthase family 3 (KS3)" evidence="3">
    <location>
        <begin position="389"/>
        <end position="783"/>
    </location>
</feature>
<feature type="domain" description="PKS/mFAS DH" evidence="4">
    <location>
        <begin position="1270"/>
        <end position="1581"/>
    </location>
</feature>
<feature type="domain" description="Carrier" evidence="2">
    <location>
        <begin position="1671"/>
        <end position="1747"/>
    </location>
</feature>
<feature type="region of interest" description="N-terminal acylcarrier protein transacylase domain (SAT)" evidence="1">
    <location>
        <begin position="74"/>
        <end position="181"/>
    </location>
</feature>
<feature type="region of interest" description="Malonyl-CoA:ACP transacylase (MAT) domain" evidence="1">
    <location>
        <begin position="895"/>
        <end position="1197"/>
    </location>
</feature>
<feature type="region of interest" description="N-terminal hotdog fold" evidence="4">
    <location>
        <begin position="1270"/>
        <end position="1403"/>
    </location>
</feature>
<feature type="region of interest" description="Product template (PT) domain" evidence="1">
    <location>
        <begin position="1277"/>
        <end position="1575"/>
    </location>
</feature>
<feature type="region of interest" description="C-terminal hotdog fold" evidence="4">
    <location>
        <begin position="1428"/>
        <end position="1581"/>
    </location>
</feature>
<feature type="region of interest" description="Disordered" evidence="6">
    <location>
        <begin position="1608"/>
        <end position="1631"/>
    </location>
</feature>
<feature type="region of interest" description="Disordered" evidence="6">
    <location>
        <begin position="1650"/>
        <end position="1672"/>
    </location>
</feature>
<feature type="region of interest" description="Disordered" evidence="6">
    <location>
        <begin position="1751"/>
        <end position="1773"/>
    </location>
</feature>
<feature type="region of interest" description="Methyltransferase (CMeT) domain" evidence="1">
    <location>
        <begin position="1975"/>
        <end position="2155"/>
    </location>
</feature>
<feature type="compositionally biased region" description="Low complexity" evidence="6">
    <location>
        <begin position="1650"/>
        <end position="1668"/>
    </location>
</feature>
<feature type="active site" description="For beta-ketoacyl synthase activity" evidence="3">
    <location>
        <position position="529"/>
    </location>
</feature>
<feature type="active site" description="For beta-ketoacyl synthase activity" evidence="3">
    <location>
        <position position="665"/>
    </location>
</feature>
<feature type="active site" description="For beta-ketoacyl synthase activity" evidence="3">
    <location>
        <position position="706"/>
    </location>
</feature>
<feature type="active site" description="For acyl/malonyl transferase activity" evidence="5">
    <location>
        <position position="981"/>
    </location>
</feature>
<feature type="modified residue" description="O-(pantetheine 4'-phosphoryl)serine" evidence="2">
    <location>
        <position position="1707"/>
    </location>
</feature>
<accession>I1RL11</accession>
<accession>A0A098DKZ3</accession>
<gene>
    <name evidence="10" type="primary">dpfgA</name>
    <name evidence="11" type="synonym">PKS15</name>
    <name type="ORF">FG04588</name>
    <name type="ORF">FGRAMPH1_01T15647</name>
</gene>
<name>DPFGA_GIBZE</name>
<reference key="1">
    <citation type="journal article" date="2007" name="Science">
        <title>The Fusarium graminearum genome reveals a link between localized polymorphism and pathogen specialization.</title>
        <authorList>
            <person name="Cuomo C.A."/>
            <person name="Gueldener U."/>
            <person name="Xu J.-R."/>
            <person name="Trail F."/>
            <person name="Turgeon B.G."/>
            <person name="Di Pietro A."/>
            <person name="Walton J.D."/>
            <person name="Ma L.-J."/>
            <person name="Baker S.E."/>
            <person name="Rep M."/>
            <person name="Adam G."/>
            <person name="Antoniw J."/>
            <person name="Baldwin T."/>
            <person name="Calvo S.E."/>
            <person name="Chang Y.-L."/>
            <person name="DeCaprio D."/>
            <person name="Gale L.R."/>
            <person name="Gnerre S."/>
            <person name="Goswami R.S."/>
            <person name="Hammond-Kosack K."/>
            <person name="Harris L.J."/>
            <person name="Hilburn K."/>
            <person name="Kennell J.C."/>
            <person name="Kroken S."/>
            <person name="Magnuson J.K."/>
            <person name="Mannhaupt G."/>
            <person name="Mauceli E.W."/>
            <person name="Mewes H.-W."/>
            <person name="Mitterbauer R."/>
            <person name="Muehlbauer G."/>
            <person name="Muensterkoetter M."/>
            <person name="Nelson D."/>
            <person name="O'Donnell K."/>
            <person name="Ouellet T."/>
            <person name="Qi W."/>
            <person name="Quesneville H."/>
            <person name="Roncero M.I.G."/>
            <person name="Seong K.-Y."/>
            <person name="Tetko I.V."/>
            <person name="Urban M."/>
            <person name="Waalwijk C."/>
            <person name="Ward T.J."/>
            <person name="Yao J."/>
            <person name="Birren B.W."/>
            <person name="Kistler H.C."/>
        </authorList>
    </citation>
    <scope>NUCLEOTIDE SEQUENCE [LARGE SCALE GENOMIC DNA]</scope>
    <source>
        <strain>ATCC MYA-4620 / CBS 123657 / FGSC 9075 / NRRL 31084 / PH-1</strain>
    </source>
</reference>
<reference key="2">
    <citation type="journal article" date="2010" name="Nature">
        <title>Comparative genomics reveals mobile pathogenicity chromosomes in Fusarium.</title>
        <authorList>
            <person name="Ma L.-J."/>
            <person name="van der Does H.C."/>
            <person name="Borkovich K.A."/>
            <person name="Coleman J.J."/>
            <person name="Daboussi M.-J."/>
            <person name="Di Pietro A."/>
            <person name="Dufresne M."/>
            <person name="Freitag M."/>
            <person name="Grabherr M."/>
            <person name="Henrissat B."/>
            <person name="Houterman P.M."/>
            <person name="Kang S."/>
            <person name="Shim W.-B."/>
            <person name="Woloshuk C."/>
            <person name="Xie X."/>
            <person name="Xu J.-R."/>
            <person name="Antoniw J."/>
            <person name="Baker S.E."/>
            <person name="Bluhm B.H."/>
            <person name="Breakspear A."/>
            <person name="Brown D.W."/>
            <person name="Butchko R.A.E."/>
            <person name="Chapman S."/>
            <person name="Coulson R."/>
            <person name="Coutinho P.M."/>
            <person name="Danchin E.G.J."/>
            <person name="Diener A."/>
            <person name="Gale L.R."/>
            <person name="Gardiner D.M."/>
            <person name="Goff S."/>
            <person name="Hammond-Kosack K.E."/>
            <person name="Hilburn K."/>
            <person name="Hua-Van A."/>
            <person name="Jonkers W."/>
            <person name="Kazan K."/>
            <person name="Kodira C.D."/>
            <person name="Koehrsen M."/>
            <person name="Kumar L."/>
            <person name="Lee Y.-H."/>
            <person name="Li L."/>
            <person name="Manners J.M."/>
            <person name="Miranda-Saavedra D."/>
            <person name="Mukherjee M."/>
            <person name="Park G."/>
            <person name="Park J."/>
            <person name="Park S.-Y."/>
            <person name="Proctor R.H."/>
            <person name="Regev A."/>
            <person name="Ruiz-Roldan M.C."/>
            <person name="Sain D."/>
            <person name="Sakthikumar S."/>
            <person name="Sykes S."/>
            <person name="Schwartz D.C."/>
            <person name="Turgeon B.G."/>
            <person name="Wapinski I."/>
            <person name="Yoder O."/>
            <person name="Young S."/>
            <person name="Zeng Q."/>
            <person name="Zhou S."/>
            <person name="Galagan J."/>
            <person name="Cuomo C.A."/>
            <person name="Kistler H.C."/>
            <person name="Rep M."/>
        </authorList>
    </citation>
    <scope>GENOME REANNOTATION</scope>
    <source>
        <strain>ATCC MYA-4620 / CBS 123657 / FGSC 9075 / NRRL 31084 / PH-1</strain>
    </source>
</reference>
<reference key="3">
    <citation type="journal article" date="2015" name="BMC Genomics">
        <title>The completed genome sequence of the pathogenic ascomycete fungus Fusarium graminearum.</title>
        <authorList>
            <person name="King R."/>
            <person name="Urban M."/>
            <person name="Hammond-Kosack M.C.U."/>
            <person name="Hassani-Pak K."/>
            <person name="Hammond-Kosack K.E."/>
        </authorList>
    </citation>
    <scope>NUCLEOTIDE SEQUENCE [LARGE SCALE GENOMIC DNA]</scope>
    <source>
        <strain>ATCC MYA-4620 / CBS 123657 / FGSC 9075 / NRRL 31084 / PH-1</strain>
    </source>
</reference>
<reference key="4">
    <citation type="journal article" date="2020" name="Nat. Commun.">
        <title>Synthetic biology based construction of biological activity-related library of fungal decalin-containing diterpenoid pyrones.</title>
        <authorList>
            <person name="Tsukada K."/>
            <person name="Shinki S."/>
            <person name="Kaneko A."/>
            <person name="Murakami K."/>
            <person name="Irie K."/>
            <person name="Murai M."/>
            <person name="Miyoshi H."/>
            <person name="Dan S."/>
            <person name="Kawaji K."/>
            <person name="Hayashi H."/>
            <person name="Kodama E.N."/>
            <person name="Hori A."/>
            <person name="Salim E."/>
            <person name="Kuraishi T."/>
            <person name="Hirata N."/>
            <person name="Kanda Y."/>
            <person name="Asai T."/>
        </authorList>
    </citation>
    <scope>FUNCTION</scope>
    <scope>PATHWAY</scope>
    <scope>BIOTECHNOLOGY</scope>
</reference>
<reference key="5">
    <citation type="journal article" date="2022" name="J. Fungi">
        <title>Gramiketides, Novel Polyketide Derivatives of Fusarium graminearum, Are Produced during the Infection of Wheat.</title>
        <authorList>
            <person name="Seidl B."/>
            <person name="Rehak K."/>
            <person name="Bueschl C."/>
            <person name="Parich A."/>
            <person name="Buathong R."/>
            <person name="Wolf B."/>
            <person name="Doppler M."/>
            <person name="Mitterbauer R."/>
            <person name="Adam G."/>
            <person name="Khewkhom N."/>
            <person name="Wiesenberger G."/>
            <person name="Schuhmacher R."/>
        </authorList>
    </citation>
    <scope>FUNCTION</scope>
    <scope>DISRUPTION PHENOTYPE</scope>
</reference>
<reference key="6">
    <citation type="journal article" date="2023" name="J. Fungi">
        <title>CRISPR-Cas9 Gene Editing and Secondary Metabolite Screening Confirm Fusarium graminearum C16 Biosynthetic Gene Cluster Products as Decalin-Containing Diterpenoid Pyrones.</title>
        <authorList>
            <person name="Hicks C."/>
            <person name="Witte T.E."/>
            <person name="Sproule A."/>
            <person name="Hermans A."/>
            <person name="Shields S.W."/>
            <person name="Colquhoun R."/>
            <person name="Blackman C."/>
            <person name="Boddy C.N."/>
            <person name="Subramaniam R."/>
            <person name="Overy D.P."/>
        </authorList>
    </citation>
    <scope>FUNCTION</scope>
    <scope>DISRUPTION PHENOTYPE</scope>
</reference>